<gene>
    <name type="primary">rps7-A</name>
    <name type="ordered locus">LOC_Osp1g00820</name>
    <name type="ORF">Nip129</name>
</gene>
<gene>
    <name type="primary">rps7-B</name>
    <name type="ORF">Nip206</name>
</gene>
<feature type="chain" id="PRO_0000290086" description="Small ribosomal subunit protein uS7cz/uS7cy">
    <location>
        <begin position="1"/>
        <end position="156"/>
    </location>
</feature>
<feature type="sequence conflict" description="In Ref. 1; CAA29827." evidence="3" ref="1">
    <original>RALAIRWLLEASQ</original>
    <variation>KSTCHSLVIRSIP</variation>
    <location>
        <begin position="98"/>
        <end position="110"/>
    </location>
</feature>
<feature type="sequence conflict" description="In Ref. 1; CAA29827." evidence="3" ref="1">
    <original>ATHRMAEANRALAHFR</original>
    <variation>RSNASNRLLHIFV</variation>
    <location>
        <begin position="141"/>
        <end position="156"/>
    </location>
</feature>
<sequence length="156" mass="17629">MSRRGTAEKRTAKSDPIFRNRLVNMVVNRIMKDGKKSLAYQILYRAVKKIQQKTETNPLLVLRQAIRRVTPNIGVKTRRNKKGSTRKVPIEIGSKQGRALAIRWLLEASQKRPGRNMAFKLSSELVDAAKGGGGAIRKKEATHRMAEANRALAHFR</sequence>
<geneLocation type="chloroplast"/>
<dbReference type="EMBL" id="X06612">
    <property type="protein sequence ID" value="CAA29827.1"/>
    <property type="molecule type" value="Genomic_DNA"/>
</dbReference>
<dbReference type="EMBL" id="X15901">
    <property type="protein sequence ID" value="CAA33919.1"/>
    <property type="molecule type" value="Genomic_DNA"/>
</dbReference>
<dbReference type="EMBL" id="X15901">
    <property type="protein sequence ID" value="CAA33942.1"/>
    <property type="molecule type" value="Genomic_DNA"/>
</dbReference>
<dbReference type="EMBL" id="AY522330">
    <property type="protein sequence ID" value="AAS46151.1"/>
    <property type="status" value="ALT_INIT"/>
    <property type="molecule type" value="Genomic_DNA"/>
</dbReference>
<dbReference type="EMBL" id="AY522330">
    <property type="protein sequence ID" value="AAS46164.1"/>
    <property type="status" value="ALT_INIT"/>
    <property type="molecule type" value="Genomic_DNA"/>
</dbReference>
<dbReference type="PIR" id="JQ0276">
    <property type="entry name" value="R3RZ7"/>
</dbReference>
<dbReference type="RefSeq" id="XP_015612724.1">
    <property type="nucleotide sequence ID" value="XM_015757238.1"/>
</dbReference>
<dbReference type="RefSeq" id="XP_015635025.1">
    <property type="nucleotide sequence ID" value="XM_015779539.1"/>
</dbReference>
<dbReference type="RefSeq" id="XP_015646874.1">
    <property type="nucleotide sequence ID" value="XM_015791388.1"/>
</dbReference>
<dbReference type="RefSeq" id="XP_015649752.1">
    <property type="nucleotide sequence ID" value="XM_015794266.1"/>
</dbReference>
<dbReference type="SMR" id="P0C491"/>
<dbReference type="FunCoup" id="P0C491">
    <property type="interactions" value="1203"/>
</dbReference>
<dbReference type="STRING" id="39947.P0C491"/>
<dbReference type="PaxDb" id="39947-P0C491"/>
<dbReference type="EnsemblPlants" id="transcript-rps7">
    <property type="protein sequence ID" value="cds-CAA33942.1"/>
    <property type="gene ID" value="gene-rps7"/>
</dbReference>
<dbReference type="EnsemblPlants" id="transcript-rps7-2">
    <property type="protein sequence ID" value="cds-CAA33919.1"/>
    <property type="gene ID" value="gene-rps7-2"/>
</dbReference>
<dbReference type="Gramene" id="transcript-rps7">
    <property type="protein sequence ID" value="cds-CAA33942.1"/>
    <property type="gene ID" value="gene-rps7"/>
</dbReference>
<dbReference type="Gramene" id="transcript-rps7-2">
    <property type="protein sequence ID" value="cds-CAA33919.1"/>
    <property type="gene ID" value="gene-rps7-2"/>
</dbReference>
<dbReference type="KEGG" id="dosa:rps7.1"/>
<dbReference type="KEGG" id="osa:3131444"/>
<dbReference type="KEGG" id="osa:3131445"/>
<dbReference type="eggNOG" id="KOG3291">
    <property type="taxonomic scope" value="Eukaryota"/>
</dbReference>
<dbReference type="HOGENOM" id="CLU_072226_5_1_1"/>
<dbReference type="InParanoid" id="P0C491"/>
<dbReference type="OrthoDB" id="607010at2759"/>
<dbReference type="Proteomes" id="UP000059680">
    <property type="component" value="Chloroplast"/>
</dbReference>
<dbReference type="GO" id="GO:0009507">
    <property type="term" value="C:chloroplast"/>
    <property type="evidence" value="ECO:0007669"/>
    <property type="project" value="UniProtKB-SubCell"/>
</dbReference>
<dbReference type="GO" id="GO:0009536">
    <property type="term" value="C:plastid"/>
    <property type="evidence" value="ECO:0000305"/>
    <property type="project" value="Gramene"/>
</dbReference>
<dbReference type="GO" id="GO:0005840">
    <property type="term" value="C:ribosome"/>
    <property type="evidence" value="ECO:0000318"/>
    <property type="project" value="GO_Central"/>
</dbReference>
<dbReference type="GO" id="GO:0015935">
    <property type="term" value="C:small ribosomal subunit"/>
    <property type="evidence" value="ECO:0007669"/>
    <property type="project" value="InterPro"/>
</dbReference>
<dbReference type="GO" id="GO:0003729">
    <property type="term" value="F:mRNA binding"/>
    <property type="evidence" value="ECO:0000318"/>
    <property type="project" value="GO_Central"/>
</dbReference>
<dbReference type="GO" id="GO:0019843">
    <property type="term" value="F:rRNA binding"/>
    <property type="evidence" value="ECO:0000318"/>
    <property type="project" value="GO_Central"/>
</dbReference>
<dbReference type="GO" id="GO:0003735">
    <property type="term" value="F:structural constituent of ribosome"/>
    <property type="evidence" value="ECO:0000318"/>
    <property type="project" value="GO_Central"/>
</dbReference>
<dbReference type="GO" id="GO:0000028">
    <property type="term" value="P:ribosomal small subunit assembly"/>
    <property type="evidence" value="ECO:0000318"/>
    <property type="project" value="GO_Central"/>
</dbReference>
<dbReference type="GO" id="GO:0006412">
    <property type="term" value="P:translation"/>
    <property type="evidence" value="ECO:0000318"/>
    <property type="project" value="GO_Central"/>
</dbReference>
<dbReference type="CDD" id="cd14871">
    <property type="entry name" value="uS7_Chloroplast"/>
    <property type="match status" value="1"/>
</dbReference>
<dbReference type="FunFam" id="1.10.455.10:FF:000001">
    <property type="entry name" value="30S ribosomal protein S7"/>
    <property type="match status" value="1"/>
</dbReference>
<dbReference type="Gene3D" id="1.10.455.10">
    <property type="entry name" value="Ribosomal protein S7 domain"/>
    <property type="match status" value="1"/>
</dbReference>
<dbReference type="HAMAP" id="MF_00480_B">
    <property type="entry name" value="Ribosomal_uS7_B"/>
    <property type="match status" value="1"/>
</dbReference>
<dbReference type="InterPro" id="IPR000235">
    <property type="entry name" value="Ribosomal_uS7"/>
</dbReference>
<dbReference type="InterPro" id="IPR005717">
    <property type="entry name" value="Ribosomal_uS7_bac/org-type"/>
</dbReference>
<dbReference type="InterPro" id="IPR020606">
    <property type="entry name" value="Ribosomal_uS7_CS"/>
</dbReference>
<dbReference type="InterPro" id="IPR023798">
    <property type="entry name" value="Ribosomal_uS7_dom"/>
</dbReference>
<dbReference type="InterPro" id="IPR036823">
    <property type="entry name" value="Ribosomal_uS7_dom_sf"/>
</dbReference>
<dbReference type="NCBIfam" id="TIGR01029">
    <property type="entry name" value="rpsG_bact"/>
    <property type="match status" value="1"/>
</dbReference>
<dbReference type="PANTHER" id="PTHR11205">
    <property type="entry name" value="RIBOSOMAL PROTEIN S7"/>
    <property type="match status" value="1"/>
</dbReference>
<dbReference type="Pfam" id="PF00177">
    <property type="entry name" value="Ribosomal_S7"/>
    <property type="match status" value="1"/>
</dbReference>
<dbReference type="PIRSF" id="PIRSF002122">
    <property type="entry name" value="RPS7p_RPS7a_RPS5e_RPS7o"/>
    <property type="match status" value="1"/>
</dbReference>
<dbReference type="SUPFAM" id="SSF47973">
    <property type="entry name" value="Ribosomal protein S7"/>
    <property type="match status" value="1"/>
</dbReference>
<dbReference type="PROSITE" id="PS00052">
    <property type="entry name" value="RIBOSOMAL_S7"/>
    <property type="match status" value="1"/>
</dbReference>
<organism>
    <name type="scientific">Oryza sativa subsp. japonica</name>
    <name type="common">Rice</name>
    <dbReference type="NCBI Taxonomy" id="39947"/>
    <lineage>
        <taxon>Eukaryota</taxon>
        <taxon>Viridiplantae</taxon>
        <taxon>Streptophyta</taxon>
        <taxon>Embryophyta</taxon>
        <taxon>Tracheophyta</taxon>
        <taxon>Spermatophyta</taxon>
        <taxon>Magnoliopsida</taxon>
        <taxon>Liliopsida</taxon>
        <taxon>Poales</taxon>
        <taxon>Poaceae</taxon>
        <taxon>BOP clade</taxon>
        <taxon>Oryzoideae</taxon>
        <taxon>Oryzeae</taxon>
        <taxon>Oryzinae</taxon>
        <taxon>Oryza</taxon>
        <taxon>Oryza sativa</taxon>
    </lineage>
</organism>
<evidence type="ECO:0000250" key="1"/>
<evidence type="ECO:0000255" key="2">
    <source>
        <dbReference type="HAMAP-Rule" id="MF_00480"/>
    </source>
</evidence>
<evidence type="ECO:0000305" key="3"/>
<comment type="function">
    <text evidence="1">One of the primary rRNA binding proteins, it binds directly to 16S rRNA where it nucleates assembly of the head domain of the 30S subunit.</text>
</comment>
<comment type="subunit">
    <text>Part of the 30S ribosomal subunit.</text>
</comment>
<comment type="subcellular location">
    <subcellularLocation>
        <location>Plastid</location>
        <location>Chloroplast</location>
    </subcellularLocation>
</comment>
<comment type="similarity">
    <text evidence="3">Belongs to the universal ribosomal protein uS7 family.</text>
</comment>
<comment type="sequence caution" evidence="3">
    <conflict type="erroneous initiation">
        <sequence resource="EMBL-CDS" id="AAS46151"/>
    </conflict>
    <text>Truncated N-terminus.</text>
</comment>
<comment type="sequence caution" evidence="3">
    <conflict type="erroneous initiation">
        <sequence resource="EMBL-CDS" id="AAS46164"/>
    </conflict>
    <text>Truncated N-terminus.</text>
</comment>
<proteinExistence type="inferred from homology"/>
<name>RR7_ORYSJ</name>
<keyword id="KW-0150">Chloroplast</keyword>
<keyword id="KW-0934">Plastid</keyword>
<keyword id="KW-1185">Reference proteome</keyword>
<keyword id="KW-0687">Ribonucleoprotein</keyword>
<keyword id="KW-0689">Ribosomal protein</keyword>
<keyword id="KW-0694">RNA-binding</keyword>
<keyword id="KW-0699">rRNA-binding</keyword>
<reference key="1">
    <citation type="journal article" date="1987" name="Mol. Gen. Genet.">
        <title>Variable copy number DNA sequences in rice.</title>
        <authorList>
            <person name="Kikuchi S."/>
            <person name="Takaiwa F."/>
            <person name="Oono K."/>
        </authorList>
    </citation>
    <scope>NUCLEOTIDE SEQUENCE [GENOMIC DNA]</scope>
    <source>
        <strain>cv. Nipponbare</strain>
    </source>
</reference>
<reference key="2">
    <citation type="journal article" date="1989" name="Mol. Gen. Genet.">
        <title>The complete sequence of the rice (Oryza sativa) chloroplast genome: intermolecular recombination between distinct tRNA genes accounts for a major plastid DNA inversion during the evolution of the cereals.</title>
        <authorList>
            <person name="Hiratsuka J."/>
            <person name="Shimada H."/>
            <person name="Whittier R."/>
            <person name="Ishibashi T."/>
            <person name="Sakamoto M."/>
            <person name="Mori M."/>
            <person name="Kondo C."/>
            <person name="Honji Y."/>
            <person name="Sun C.-R."/>
            <person name="Meng B.-Y."/>
            <person name="Li Y.-Q."/>
            <person name="Kanno A."/>
            <person name="Nishizawa Y."/>
            <person name="Hirai A."/>
            <person name="Shinozaki K."/>
            <person name="Sugiura M."/>
        </authorList>
    </citation>
    <scope>NUCLEOTIDE SEQUENCE [LARGE SCALE GENOMIC DNA]</scope>
    <source>
        <strain>cv. Nipponbare</strain>
    </source>
</reference>
<reference key="3">
    <citation type="journal article" date="2004" name="Plant Physiol.">
        <title>A comparison of rice chloroplast genomes.</title>
        <authorList>
            <person name="Tang J."/>
            <person name="Xia H."/>
            <person name="Cao M."/>
            <person name="Zhang X."/>
            <person name="Zeng W."/>
            <person name="Hu S."/>
            <person name="Tong W."/>
            <person name="Wang J."/>
            <person name="Wang J."/>
            <person name="Yu J."/>
            <person name="Yang H."/>
            <person name="Zhu L."/>
        </authorList>
    </citation>
    <scope>NUCLEOTIDE SEQUENCE [LARGE SCALE GENOMIC DNA]</scope>
    <source>
        <strain>cv. Nipponbare</strain>
    </source>
</reference>
<protein>
    <recommendedName>
        <fullName evidence="2">Small ribosomal subunit protein uS7cz/uS7cy</fullName>
    </recommendedName>
    <alternativeName>
        <fullName>30S ribosomal protein S7, chloroplastic</fullName>
    </alternativeName>
</protein>
<accession>P0C491</accession>
<accession>P05424</accession>
<accession>P62730</accession>
<accession>Q6QXY0</accession>
<accession>Q6QY30</accession>